<name>BETA_BURA4</name>
<dbReference type="EC" id="1.1.99.1" evidence="1"/>
<dbReference type="EC" id="1.2.1.8" evidence="1"/>
<dbReference type="EMBL" id="CP001026">
    <property type="protein sequence ID" value="ACB67483.1"/>
    <property type="molecule type" value="Genomic_DNA"/>
</dbReference>
<dbReference type="RefSeq" id="WP_012366747.1">
    <property type="nucleotide sequence ID" value="NC_010552.1"/>
</dbReference>
<dbReference type="SMR" id="B1Z034"/>
<dbReference type="CAZy" id="AA3">
    <property type="family name" value="Auxiliary Activities 3"/>
</dbReference>
<dbReference type="KEGG" id="bac:BamMC406_5037"/>
<dbReference type="HOGENOM" id="CLU_002865_7_1_4"/>
<dbReference type="OrthoDB" id="9785276at2"/>
<dbReference type="UniPathway" id="UPA00529">
    <property type="reaction ID" value="UER00385"/>
</dbReference>
<dbReference type="Proteomes" id="UP000001680">
    <property type="component" value="Chromosome 2"/>
</dbReference>
<dbReference type="GO" id="GO:0016020">
    <property type="term" value="C:membrane"/>
    <property type="evidence" value="ECO:0007669"/>
    <property type="project" value="TreeGrafter"/>
</dbReference>
<dbReference type="GO" id="GO:0008802">
    <property type="term" value="F:betaine-aldehyde dehydrogenase (NAD+) activity"/>
    <property type="evidence" value="ECO:0007669"/>
    <property type="project" value="UniProtKB-EC"/>
</dbReference>
<dbReference type="GO" id="GO:0008812">
    <property type="term" value="F:choline dehydrogenase activity"/>
    <property type="evidence" value="ECO:0007669"/>
    <property type="project" value="UniProtKB-UniRule"/>
</dbReference>
<dbReference type="GO" id="GO:0050660">
    <property type="term" value="F:flavin adenine dinucleotide binding"/>
    <property type="evidence" value="ECO:0007669"/>
    <property type="project" value="InterPro"/>
</dbReference>
<dbReference type="GO" id="GO:0019285">
    <property type="term" value="P:glycine betaine biosynthetic process from choline"/>
    <property type="evidence" value="ECO:0007669"/>
    <property type="project" value="UniProtKB-UniRule"/>
</dbReference>
<dbReference type="Gene3D" id="3.50.50.60">
    <property type="entry name" value="FAD/NAD(P)-binding domain"/>
    <property type="match status" value="1"/>
</dbReference>
<dbReference type="Gene3D" id="3.30.560.10">
    <property type="entry name" value="Glucose Oxidase, domain 3"/>
    <property type="match status" value="1"/>
</dbReference>
<dbReference type="HAMAP" id="MF_00750">
    <property type="entry name" value="Choline_dehydrogen"/>
    <property type="match status" value="1"/>
</dbReference>
<dbReference type="InterPro" id="IPR011533">
    <property type="entry name" value="BetA"/>
</dbReference>
<dbReference type="InterPro" id="IPR036188">
    <property type="entry name" value="FAD/NAD-bd_sf"/>
</dbReference>
<dbReference type="InterPro" id="IPR012132">
    <property type="entry name" value="GMC_OxRdtase"/>
</dbReference>
<dbReference type="InterPro" id="IPR000172">
    <property type="entry name" value="GMC_OxRdtase_N"/>
</dbReference>
<dbReference type="InterPro" id="IPR007867">
    <property type="entry name" value="GMC_OxRtase_C"/>
</dbReference>
<dbReference type="NCBIfam" id="TIGR01810">
    <property type="entry name" value="betA"/>
    <property type="match status" value="1"/>
</dbReference>
<dbReference type="NCBIfam" id="NF002550">
    <property type="entry name" value="PRK02106.1"/>
    <property type="match status" value="1"/>
</dbReference>
<dbReference type="PANTHER" id="PTHR11552:SF147">
    <property type="entry name" value="CHOLINE DEHYDROGENASE, MITOCHONDRIAL"/>
    <property type="match status" value="1"/>
</dbReference>
<dbReference type="PANTHER" id="PTHR11552">
    <property type="entry name" value="GLUCOSE-METHANOL-CHOLINE GMC OXIDOREDUCTASE"/>
    <property type="match status" value="1"/>
</dbReference>
<dbReference type="Pfam" id="PF05199">
    <property type="entry name" value="GMC_oxred_C"/>
    <property type="match status" value="1"/>
</dbReference>
<dbReference type="Pfam" id="PF00732">
    <property type="entry name" value="GMC_oxred_N"/>
    <property type="match status" value="1"/>
</dbReference>
<dbReference type="PIRSF" id="PIRSF000137">
    <property type="entry name" value="Alcohol_oxidase"/>
    <property type="match status" value="1"/>
</dbReference>
<dbReference type="SUPFAM" id="SSF54373">
    <property type="entry name" value="FAD-linked reductases, C-terminal domain"/>
    <property type="match status" value="1"/>
</dbReference>
<dbReference type="SUPFAM" id="SSF51905">
    <property type="entry name" value="FAD/NAD(P)-binding domain"/>
    <property type="match status" value="1"/>
</dbReference>
<dbReference type="PROSITE" id="PS00623">
    <property type="entry name" value="GMC_OXRED_1"/>
    <property type="match status" value="1"/>
</dbReference>
<dbReference type="PROSITE" id="PS00624">
    <property type="entry name" value="GMC_OXRED_2"/>
    <property type="match status" value="1"/>
</dbReference>
<evidence type="ECO:0000255" key="1">
    <source>
        <dbReference type="HAMAP-Rule" id="MF_00750"/>
    </source>
</evidence>
<evidence type="ECO:0000256" key="2">
    <source>
        <dbReference type="SAM" id="MobiDB-lite"/>
    </source>
</evidence>
<organism>
    <name type="scientific">Burkholderia ambifaria (strain MC40-6)</name>
    <dbReference type="NCBI Taxonomy" id="398577"/>
    <lineage>
        <taxon>Bacteria</taxon>
        <taxon>Pseudomonadati</taxon>
        <taxon>Pseudomonadota</taxon>
        <taxon>Betaproteobacteria</taxon>
        <taxon>Burkholderiales</taxon>
        <taxon>Burkholderiaceae</taxon>
        <taxon>Burkholderia</taxon>
        <taxon>Burkholderia cepacia complex</taxon>
    </lineage>
</organism>
<protein>
    <recommendedName>
        <fullName evidence="1">Oxygen-dependent choline dehydrogenase</fullName>
        <shortName evidence="1">CDH</shortName>
        <shortName evidence="1">CHD</shortName>
        <ecNumber evidence="1">1.1.99.1</ecNumber>
    </recommendedName>
    <alternativeName>
        <fullName evidence="1">Betaine aldehyde dehydrogenase</fullName>
        <shortName evidence="1">BADH</shortName>
        <ecNumber evidence="1">1.2.1.8</ecNumber>
    </alternativeName>
</protein>
<reference key="1">
    <citation type="submission" date="2008-04" db="EMBL/GenBank/DDBJ databases">
        <title>Complete sequence of chromosome 2 of Burkholderia ambifaria MC40-6.</title>
        <authorList>
            <person name="Copeland A."/>
            <person name="Lucas S."/>
            <person name="Lapidus A."/>
            <person name="Glavina del Rio T."/>
            <person name="Dalin E."/>
            <person name="Tice H."/>
            <person name="Pitluck S."/>
            <person name="Chain P."/>
            <person name="Malfatti S."/>
            <person name="Shin M."/>
            <person name="Vergez L."/>
            <person name="Lang D."/>
            <person name="Schmutz J."/>
            <person name="Larimer F."/>
            <person name="Land M."/>
            <person name="Hauser L."/>
            <person name="Kyrpides N."/>
            <person name="Lykidis A."/>
            <person name="Ramette A."/>
            <person name="Konstantinidis K."/>
            <person name="Tiedje J."/>
            <person name="Richardson P."/>
        </authorList>
    </citation>
    <scope>NUCLEOTIDE SEQUENCE [LARGE SCALE GENOMIC DNA]</scope>
    <source>
        <strain>MC40-6</strain>
    </source>
</reference>
<comment type="function">
    <text evidence="1">Involved in the biosynthesis of the osmoprotectant glycine betaine. Catalyzes the oxidation of choline to betaine aldehyde and betaine aldehyde to glycine betaine at the same rate.</text>
</comment>
<comment type="catalytic activity">
    <reaction evidence="1">
        <text>choline + A = betaine aldehyde + AH2</text>
        <dbReference type="Rhea" id="RHEA:17433"/>
        <dbReference type="ChEBI" id="CHEBI:13193"/>
        <dbReference type="ChEBI" id="CHEBI:15354"/>
        <dbReference type="ChEBI" id="CHEBI:15710"/>
        <dbReference type="ChEBI" id="CHEBI:17499"/>
        <dbReference type="EC" id="1.1.99.1"/>
    </reaction>
</comment>
<comment type="catalytic activity">
    <reaction evidence="1">
        <text>betaine aldehyde + NAD(+) + H2O = glycine betaine + NADH + 2 H(+)</text>
        <dbReference type="Rhea" id="RHEA:15305"/>
        <dbReference type="ChEBI" id="CHEBI:15377"/>
        <dbReference type="ChEBI" id="CHEBI:15378"/>
        <dbReference type="ChEBI" id="CHEBI:15710"/>
        <dbReference type="ChEBI" id="CHEBI:17750"/>
        <dbReference type="ChEBI" id="CHEBI:57540"/>
        <dbReference type="ChEBI" id="CHEBI:57945"/>
        <dbReference type="EC" id="1.2.1.8"/>
    </reaction>
</comment>
<comment type="cofactor">
    <cofactor evidence="1">
        <name>FAD</name>
        <dbReference type="ChEBI" id="CHEBI:57692"/>
    </cofactor>
</comment>
<comment type="pathway">
    <text evidence="1">Amine and polyamine biosynthesis; betaine biosynthesis via choline pathway; betaine aldehyde from choline (cytochrome c reductase route): step 1/1.</text>
</comment>
<comment type="similarity">
    <text evidence="1">Belongs to the GMC oxidoreductase family.</text>
</comment>
<proteinExistence type="inferred from homology"/>
<sequence length="566" mass="62930">MTTREYDYIICGAGSAGNVLATRLTEDPNVTVLLLEAGGPDYRFDFRTQMPAALAYPLQGRRYNWAYETDPEPHMDNRRMECGRGKGLGGSSLINGMCYIRGNALDYDNWSTHKGLENWTYLDCLPYFKKAETRDVGPNDYHGGDGPVSVTTSKPGVNPLFEAMVDAGVQAGYPRTDDLNGYQQEGFGPMDRTVTPKGRRASTARGYLDQAKGRPNLEIVTHALADRILFDGKRASGVTYLRGSERANAHARREVLVCSGAIASPQLLQRSGVGPGAWLKELDIPIVLDLPGVGQNLQDHLEMYIQYECKEPVSLYPALKWWNQPKIGLEWMLNGTGLGASNHFEAGGFIRTRDDDPWPNIQYHFLPVAINYNGSNAIEMHGFQAHVGSMRSPSRGRVKLRSRDPNAHPSILFNYMAEALDWREFRDAIRATREIMRQPALDRYRGRELNPGADCKSDKELDTFVRSRAETAFHPSCSCKMGYDDMAVVDEEGRVHGLEGLRVVDASIMPIITTGNLNAPTIMIAEKIADKIRGRQPLARVDVPYFVANGAMARNVAKAVRQPETV</sequence>
<feature type="chain" id="PRO_1000133320" description="Oxygen-dependent choline dehydrogenase">
    <location>
        <begin position="1"/>
        <end position="566"/>
    </location>
</feature>
<feature type="region of interest" description="Disordered" evidence="2">
    <location>
        <begin position="180"/>
        <end position="203"/>
    </location>
</feature>
<feature type="active site" description="Proton acceptor" evidence="1">
    <location>
        <position position="474"/>
    </location>
</feature>
<feature type="binding site" evidence="1">
    <location>
        <begin position="7"/>
        <end position="36"/>
    </location>
    <ligand>
        <name>FAD</name>
        <dbReference type="ChEBI" id="CHEBI:57692"/>
    </ligand>
</feature>
<keyword id="KW-0274">FAD</keyword>
<keyword id="KW-0285">Flavoprotein</keyword>
<keyword id="KW-0520">NAD</keyword>
<keyword id="KW-0560">Oxidoreductase</keyword>
<accession>B1Z034</accession>
<gene>
    <name evidence="1" type="primary">betA</name>
    <name type="ordered locus">BamMC406_5037</name>
</gene>